<organism>
    <name type="scientific">Capsicum chinense</name>
    <name type="common">Scotch bonnet</name>
    <name type="synonym">Bonnet pepper</name>
    <dbReference type="NCBI Taxonomy" id="80379"/>
    <lineage>
        <taxon>Eukaryota</taxon>
        <taxon>Viridiplantae</taxon>
        <taxon>Streptophyta</taxon>
        <taxon>Embryophyta</taxon>
        <taxon>Tracheophyta</taxon>
        <taxon>Spermatophyta</taxon>
        <taxon>Magnoliopsida</taxon>
        <taxon>eudicotyledons</taxon>
        <taxon>Gunneridae</taxon>
        <taxon>Pentapetalae</taxon>
        <taxon>asterids</taxon>
        <taxon>lamiids</taxon>
        <taxon>Solanales</taxon>
        <taxon>Solanaceae</taxon>
        <taxon>Solanoideae</taxon>
        <taxon>Capsiceae</taxon>
        <taxon>Capsicum</taxon>
    </lineage>
</organism>
<reference evidence="3" key="1">
    <citation type="submission" date="2008-07" db="UniProtKB">
        <authorList>
            <person name="Sabater Jara A.B."/>
            <person name="Almagro L."/>
            <person name="Pedreno M.A."/>
        </authorList>
    </citation>
    <scope>PROTEIN SEQUENCE</scope>
</reference>
<evidence type="ECO:0000250" key="1">
    <source>
        <dbReference type="UniProtKB" id="P04063"/>
    </source>
</evidence>
<evidence type="ECO:0000255" key="2"/>
<evidence type="ECO:0000305" key="3"/>
<keyword id="KW-0106">Calcium</keyword>
<keyword id="KW-0119">Carbohydrate metabolism</keyword>
<keyword id="KW-0903">Direct protein sequencing</keyword>
<keyword id="KW-0326">Glycosidase</keyword>
<keyword id="KW-0378">Hydrolase</keyword>
<keyword id="KW-0479">Metal-binding</keyword>
<proteinExistence type="evidence at protein level"/>
<protein>
    <recommendedName>
        <fullName evidence="1">Alpha-amylase 4</fullName>
        <ecNumber>3.2.1.1</ecNumber>
    </recommendedName>
    <alternativeName>
        <fullName evidence="1">1,4-alpha-D-glucan glucanohydrolase</fullName>
    </alternativeName>
</protein>
<feature type="chain" id="PRO_0000362986" description="Alpha-amylase 4">
    <location>
        <begin position="1" status="less than"/>
        <end position="9" status="greater than"/>
    </location>
</feature>
<feature type="unsure residue" description="F or M">
    <location>
        <position position="5"/>
    </location>
</feature>
<feature type="non-terminal residue">
    <location>
        <position position="1"/>
    </location>
</feature>
<feature type="non-terminal residue">
    <location>
        <position position="9"/>
    </location>
</feature>
<dbReference type="EC" id="3.2.1.1"/>
<dbReference type="GO" id="GO:0004556">
    <property type="term" value="F:alpha-amylase activity"/>
    <property type="evidence" value="ECO:0007669"/>
    <property type="project" value="UniProtKB-EC"/>
</dbReference>
<dbReference type="GO" id="GO:0046872">
    <property type="term" value="F:metal ion binding"/>
    <property type="evidence" value="ECO:0007669"/>
    <property type="project" value="UniProtKB-KW"/>
</dbReference>
<comment type="catalytic activity">
    <reaction>
        <text>Endohydrolysis of (1-&gt;4)-alpha-D-glucosidic linkages in polysaccharides containing three or more (1-&gt;4)-alpha-linked D-glucose units.</text>
        <dbReference type="EC" id="3.2.1.1"/>
    </reaction>
</comment>
<comment type="cofactor">
    <cofactor evidence="1">
        <name>Ca(2+)</name>
        <dbReference type="ChEBI" id="CHEBI:29108"/>
    </cofactor>
    <text evidence="1">Binds 3 Ca(2+) ions per subunit.</text>
</comment>
<comment type="subunit">
    <text evidence="1">Monomer.</text>
</comment>
<comment type="similarity">
    <text evidence="2">Belongs to the glycosyl hydrolase 13 family.</text>
</comment>
<name>AMY4_CAPCH</name>
<accession>P86090</accession>
<sequence>TDVGFDGWR</sequence>